<comment type="function">
    <text evidence="1">Component of the thioredoxin-thioredoxin reductase system. Participates in various redox reactions through the reversible oxidation of its active center dithiol to a disulfide and catalyzes dithiol-disulfide exchange reactions (By similarity).</text>
</comment>
<comment type="similarity">
    <text evidence="3">Belongs to the thioredoxin family.</text>
</comment>
<comment type="sequence caution" evidence="3">
    <conflict type="erroneous initiation">
        <sequence resource="EMBL-CDS" id="CAA14475"/>
    </conflict>
</comment>
<gene>
    <name type="primary">trxA</name>
    <name type="ordered locus">RP002</name>
</gene>
<protein>
    <recommendedName>
        <fullName>Thioredoxin</fullName>
        <shortName>Trx</shortName>
    </recommendedName>
</protein>
<feature type="chain" id="PRO_0000120124" description="Thioredoxin">
    <location>
        <begin position="1"/>
        <end position="105"/>
    </location>
</feature>
<feature type="domain" description="Thioredoxin" evidence="2">
    <location>
        <begin position="1"/>
        <end position="105"/>
    </location>
</feature>
<feature type="disulfide bond" description="Redox-active" evidence="2">
    <location>
        <begin position="30"/>
        <end position="33"/>
    </location>
</feature>
<feature type="turn" evidence="4">
    <location>
        <begin position="7"/>
        <end position="9"/>
    </location>
</feature>
<feature type="helix" evidence="4">
    <location>
        <begin position="10"/>
        <end position="13"/>
    </location>
</feature>
<feature type="turn" evidence="4">
    <location>
        <begin position="14"/>
        <end position="16"/>
    </location>
</feature>
<feature type="strand" evidence="4">
    <location>
        <begin position="21"/>
        <end position="26"/>
    </location>
</feature>
<feature type="helix" evidence="4">
    <location>
        <begin position="31"/>
        <end position="46"/>
    </location>
</feature>
<feature type="turn" evidence="4">
    <location>
        <begin position="47"/>
        <end position="50"/>
    </location>
</feature>
<feature type="strand" evidence="4">
    <location>
        <begin position="52"/>
        <end position="57"/>
    </location>
</feature>
<feature type="turn" evidence="4">
    <location>
        <begin position="58"/>
        <end position="60"/>
    </location>
</feature>
<feature type="helix" evidence="4">
    <location>
        <begin position="63"/>
        <end position="67"/>
    </location>
</feature>
<feature type="strand" evidence="4">
    <location>
        <begin position="72"/>
        <end position="80"/>
    </location>
</feature>
<feature type="strand" evidence="4">
    <location>
        <begin position="83"/>
        <end position="90"/>
    </location>
</feature>
<feature type="helix" evidence="4">
    <location>
        <begin position="94"/>
        <end position="104"/>
    </location>
</feature>
<evidence type="ECO:0000250" key="1"/>
<evidence type="ECO:0000255" key="2">
    <source>
        <dbReference type="PROSITE-ProRule" id="PRU00691"/>
    </source>
</evidence>
<evidence type="ECO:0000305" key="3"/>
<evidence type="ECO:0007829" key="4">
    <source>
        <dbReference type="PDB" id="6NUP"/>
    </source>
</evidence>
<organism>
    <name type="scientific">Rickettsia prowazekii (strain Madrid E)</name>
    <dbReference type="NCBI Taxonomy" id="272947"/>
    <lineage>
        <taxon>Bacteria</taxon>
        <taxon>Pseudomonadati</taxon>
        <taxon>Pseudomonadota</taxon>
        <taxon>Alphaproteobacteria</taxon>
        <taxon>Rickettsiales</taxon>
        <taxon>Rickettsiaceae</taxon>
        <taxon>Rickettsieae</taxon>
        <taxon>Rickettsia</taxon>
        <taxon>typhus group</taxon>
    </lineage>
</organism>
<accession>Q9ZEE0</accession>
<proteinExistence type="evidence at protein level"/>
<name>THIO_RICPR</name>
<dbReference type="EMBL" id="AJ235270">
    <property type="protein sequence ID" value="CAA14475.1"/>
    <property type="status" value="ALT_INIT"/>
    <property type="molecule type" value="Genomic_DNA"/>
</dbReference>
<dbReference type="PIR" id="D71707">
    <property type="entry name" value="D71707"/>
</dbReference>
<dbReference type="RefSeq" id="NP_220398.1">
    <property type="nucleotide sequence ID" value="NC_000963.1"/>
</dbReference>
<dbReference type="RefSeq" id="WP_004596708.1">
    <property type="nucleotide sequence ID" value="NC_000963.1"/>
</dbReference>
<dbReference type="PDB" id="6MZA">
    <property type="method" value="NMR"/>
    <property type="chains" value="A=1-105"/>
</dbReference>
<dbReference type="PDB" id="6NUP">
    <property type="method" value="X-ray"/>
    <property type="resolution" value="1.60 A"/>
    <property type="chains" value="A=1-105"/>
</dbReference>
<dbReference type="PDBsum" id="6MZA"/>
<dbReference type="PDBsum" id="6NUP"/>
<dbReference type="BMRB" id="Q9ZEE0"/>
<dbReference type="SMR" id="Q9ZEE0"/>
<dbReference type="STRING" id="272947.gene:17555085"/>
<dbReference type="EnsemblBacteria" id="CAA14475">
    <property type="protein sequence ID" value="CAA14475"/>
    <property type="gene ID" value="CAA14475"/>
</dbReference>
<dbReference type="GeneID" id="57569131"/>
<dbReference type="KEGG" id="rpr:RP002"/>
<dbReference type="PATRIC" id="fig|272947.5.peg.2"/>
<dbReference type="eggNOG" id="COG3118">
    <property type="taxonomic scope" value="Bacteria"/>
</dbReference>
<dbReference type="HOGENOM" id="CLU_090389_10_2_5"/>
<dbReference type="OrthoDB" id="9790390at2"/>
<dbReference type="Proteomes" id="UP000002480">
    <property type="component" value="Chromosome"/>
</dbReference>
<dbReference type="GO" id="GO:0005737">
    <property type="term" value="C:cytoplasm"/>
    <property type="evidence" value="ECO:0007669"/>
    <property type="project" value="TreeGrafter"/>
</dbReference>
<dbReference type="GO" id="GO:0015035">
    <property type="term" value="F:protein-disulfide reductase activity"/>
    <property type="evidence" value="ECO:0007669"/>
    <property type="project" value="InterPro"/>
</dbReference>
<dbReference type="CDD" id="cd02947">
    <property type="entry name" value="TRX_family"/>
    <property type="match status" value="1"/>
</dbReference>
<dbReference type="FunFam" id="3.40.30.10:FF:000001">
    <property type="entry name" value="Thioredoxin"/>
    <property type="match status" value="1"/>
</dbReference>
<dbReference type="Gene3D" id="3.40.30.10">
    <property type="entry name" value="Glutaredoxin"/>
    <property type="match status" value="1"/>
</dbReference>
<dbReference type="InterPro" id="IPR005746">
    <property type="entry name" value="Thioredoxin"/>
</dbReference>
<dbReference type="InterPro" id="IPR036249">
    <property type="entry name" value="Thioredoxin-like_sf"/>
</dbReference>
<dbReference type="InterPro" id="IPR017937">
    <property type="entry name" value="Thioredoxin_CS"/>
</dbReference>
<dbReference type="InterPro" id="IPR013766">
    <property type="entry name" value="Thioredoxin_domain"/>
</dbReference>
<dbReference type="NCBIfam" id="TIGR01068">
    <property type="entry name" value="thioredoxin"/>
    <property type="match status" value="1"/>
</dbReference>
<dbReference type="PANTHER" id="PTHR45663">
    <property type="entry name" value="GEO12009P1"/>
    <property type="match status" value="1"/>
</dbReference>
<dbReference type="PANTHER" id="PTHR45663:SF11">
    <property type="entry name" value="GEO12009P1"/>
    <property type="match status" value="1"/>
</dbReference>
<dbReference type="Pfam" id="PF00085">
    <property type="entry name" value="Thioredoxin"/>
    <property type="match status" value="1"/>
</dbReference>
<dbReference type="PIRSF" id="PIRSF000077">
    <property type="entry name" value="Thioredoxin"/>
    <property type="match status" value="1"/>
</dbReference>
<dbReference type="PRINTS" id="PR00421">
    <property type="entry name" value="THIOREDOXIN"/>
</dbReference>
<dbReference type="SUPFAM" id="SSF52833">
    <property type="entry name" value="Thioredoxin-like"/>
    <property type="match status" value="1"/>
</dbReference>
<dbReference type="PROSITE" id="PS00194">
    <property type="entry name" value="THIOREDOXIN_1"/>
    <property type="match status" value="1"/>
</dbReference>
<dbReference type="PROSITE" id="PS51352">
    <property type="entry name" value="THIOREDOXIN_2"/>
    <property type="match status" value="1"/>
</dbReference>
<keyword id="KW-0002">3D-structure</keyword>
<keyword id="KW-1015">Disulfide bond</keyword>
<keyword id="KW-0249">Electron transport</keyword>
<keyword id="KW-0676">Redox-active center</keyword>
<keyword id="KW-1185">Reference proteome</keyword>
<keyword id="KW-0813">Transport</keyword>
<sequence>MVNNVTDSSFKNEVLESDLPVMVDFWAEWCGPCKMLIPIIDEISKELQDKVKVLKMNIDENPKTPSEYGIRSIPTIMLFKNGEQKDTKIGLQQKNSLLDWINKSI</sequence>
<reference key="1">
    <citation type="journal article" date="1998" name="Nature">
        <title>The genome sequence of Rickettsia prowazekii and the origin of mitochondria.</title>
        <authorList>
            <person name="Andersson S.G.E."/>
            <person name="Zomorodipour A."/>
            <person name="Andersson J.O."/>
            <person name="Sicheritz-Ponten T."/>
            <person name="Alsmark U.C.M."/>
            <person name="Podowski R.M."/>
            <person name="Naeslund A.K."/>
            <person name="Eriksson A.-S."/>
            <person name="Winkler H.H."/>
            <person name="Kurland C.G."/>
        </authorList>
    </citation>
    <scope>NUCLEOTIDE SEQUENCE [LARGE SCALE GENOMIC DNA]</scope>
    <source>
        <strain>Madrid E</strain>
    </source>
</reference>